<reference key="1">
    <citation type="journal article" date="2002" name="Nature">
        <title>Sequence and analysis of chromosome 2 of Dictyostelium discoideum.</title>
        <authorList>
            <person name="Gloeckner G."/>
            <person name="Eichinger L."/>
            <person name="Szafranski K."/>
            <person name="Pachebat J.A."/>
            <person name="Bankier A.T."/>
            <person name="Dear P.H."/>
            <person name="Lehmann R."/>
            <person name="Baumgart C."/>
            <person name="Parra G."/>
            <person name="Abril J.F."/>
            <person name="Guigo R."/>
            <person name="Kumpf K."/>
            <person name="Tunggal B."/>
            <person name="Cox E.C."/>
            <person name="Quail M.A."/>
            <person name="Platzer M."/>
            <person name="Rosenthal A."/>
            <person name="Noegel A.A."/>
        </authorList>
    </citation>
    <scope>NUCLEOTIDE SEQUENCE [LARGE SCALE GENOMIC DNA]</scope>
    <source>
        <strain>AX4</strain>
    </source>
</reference>
<reference key="2">
    <citation type="journal article" date="2005" name="Nature">
        <title>The genome of the social amoeba Dictyostelium discoideum.</title>
        <authorList>
            <person name="Eichinger L."/>
            <person name="Pachebat J.A."/>
            <person name="Gloeckner G."/>
            <person name="Rajandream M.A."/>
            <person name="Sucgang R."/>
            <person name="Berriman M."/>
            <person name="Song J."/>
            <person name="Olsen R."/>
            <person name="Szafranski K."/>
            <person name="Xu Q."/>
            <person name="Tunggal B."/>
            <person name="Kummerfeld S."/>
            <person name="Madera M."/>
            <person name="Konfortov B.A."/>
            <person name="Rivero F."/>
            <person name="Bankier A.T."/>
            <person name="Lehmann R."/>
            <person name="Hamlin N."/>
            <person name="Davies R."/>
            <person name="Gaudet P."/>
            <person name="Fey P."/>
            <person name="Pilcher K."/>
            <person name="Chen G."/>
            <person name="Saunders D."/>
            <person name="Sodergren E.J."/>
            <person name="Davis P."/>
            <person name="Kerhornou A."/>
            <person name="Nie X."/>
            <person name="Hall N."/>
            <person name="Anjard C."/>
            <person name="Hemphill L."/>
            <person name="Bason N."/>
            <person name="Farbrother P."/>
            <person name="Desany B."/>
            <person name="Just E."/>
            <person name="Morio T."/>
            <person name="Rost R."/>
            <person name="Churcher C.M."/>
            <person name="Cooper J."/>
            <person name="Haydock S."/>
            <person name="van Driessche N."/>
            <person name="Cronin A."/>
            <person name="Goodhead I."/>
            <person name="Muzny D.M."/>
            <person name="Mourier T."/>
            <person name="Pain A."/>
            <person name="Lu M."/>
            <person name="Harper D."/>
            <person name="Lindsay R."/>
            <person name="Hauser H."/>
            <person name="James K.D."/>
            <person name="Quiles M."/>
            <person name="Madan Babu M."/>
            <person name="Saito T."/>
            <person name="Buchrieser C."/>
            <person name="Wardroper A."/>
            <person name="Felder M."/>
            <person name="Thangavelu M."/>
            <person name="Johnson D."/>
            <person name="Knights A."/>
            <person name="Loulseged H."/>
            <person name="Mungall K.L."/>
            <person name="Oliver K."/>
            <person name="Price C."/>
            <person name="Quail M.A."/>
            <person name="Urushihara H."/>
            <person name="Hernandez J."/>
            <person name="Rabbinowitsch E."/>
            <person name="Steffen D."/>
            <person name="Sanders M."/>
            <person name="Ma J."/>
            <person name="Kohara Y."/>
            <person name="Sharp S."/>
            <person name="Simmonds M.N."/>
            <person name="Spiegler S."/>
            <person name="Tivey A."/>
            <person name="Sugano S."/>
            <person name="White B."/>
            <person name="Walker D."/>
            <person name="Woodward J.R."/>
            <person name="Winckler T."/>
            <person name="Tanaka Y."/>
            <person name="Shaulsky G."/>
            <person name="Schleicher M."/>
            <person name="Weinstock G.M."/>
            <person name="Rosenthal A."/>
            <person name="Cox E.C."/>
            <person name="Chisholm R.L."/>
            <person name="Gibbs R.A."/>
            <person name="Loomis W.F."/>
            <person name="Platzer M."/>
            <person name="Kay R.R."/>
            <person name="Williams J.G."/>
            <person name="Dear P.H."/>
            <person name="Noegel A.A."/>
            <person name="Barrell B.G."/>
            <person name="Kuspa A."/>
        </authorList>
    </citation>
    <scope>NUCLEOTIDE SEQUENCE [LARGE SCALE GENOMIC DNA]</scope>
    <source>
        <strain>AX4</strain>
    </source>
</reference>
<reference key="3">
    <citation type="journal article" date="2008" name="BMC Genomics">
        <title>Genome-wide transcriptional changes induced by phagocytosis or growth on bacteria in Dictyostelium.</title>
        <authorList>
            <person name="Sillo A."/>
            <person name="Bloomfield G."/>
            <person name="Balest A."/>
            <person name="Balbo A."/>
            <person name="Pergolizzi B."/>
            <person name="Peracino B."/>
            <person name="Skelton J."/>
            <person name="Ivens A."/>
            <person name="Bozzaro S."/>
        </authorList>
    </citation>
    <scope>INDUCTION [LARGE SCALE ANALYSIS]</scope>
</reference>
<keyword id="KW-0175">Coiled coil</keyword>
<keyword id="KW-0489">Methyltransferase</keyword>
<keyword id="KW-1185">Reference proteome</keyword>
<keyword id="KW-0808">Transferase</keyword>
<sequence length="437" mass="50464">MNNKTSNGDITNDEPTVGSKRSWTDVNYKFCEDKEKQVVEEIQTETSWADVDWDSVRESIAKSITEKETDIIGEEDKIHHEDNAMDYWDKFYKKNQNKFFKDRTYLHLEFPELNPLKITRDETFIFFEDDDAAAEGAENGGGGGGSDNLYQDKDDLEKQEKEREKKMANLLSKNVDIKELKNRWVKDIQELTNDESKKLTVLEIGCGTGATVYPLLKLNPEKYFYVFDFSPHAVNLVKSNSLYNEAKLNAFVCDIATEQIPTSIVKDNSIDMMLMIFVLSAISRDKMHAVANSLFKSLKPGGVLYIRDYGLYDMTQLRFISKKGKKIDENFYLRADGTRTYFFTTQVLSEIFEAAGFKTLVSKYDTRELRNRKRMISMYRVWVRGKFMKPLDNENTENNSKILSIYNDPINNNNNNNNNNNNNNNNTTTTTSTTTTN</sequence>
<feature type="chain" id="PRO_0000377490" description="O-methyltransferase 3">
    <location>
        <begin position="1"/>
        <end position="437"/>
    </location>
</feature>
<feature type="region of interest" description="Disordered" evidence="3">
    <location>
        <begin position="1"/>
        <end position="21"/>
    </location>
</feature>
<feature type="region of interest" description="Disordered" evidence="3">
    <location>
        <begin position="408"/>
        <end position="437"/>
    </location>
</feature>
<feature type="coiled-coil region" evidence="2">
    <location>
        <begin position="146"/>
        <end position="180"/>
    </location>
</feature>
<feature type="compositionally biased region" description="Low complexity" evidence="3">
    <location>
        <begin position="411"/>
        <end position="437"/>
    </location>
</feature>
<name>OMT3_DICDI</name>
<gene>
    <name type="primary">omt3</name>
    <name type="ORF">DDB_G0274197</name>
</gene>
<proteinExistence type="evidence at transcript level"/>
<evidence type="ECO:0000250" key="1"/>
<evidence type="ECO:0000255" key="2"/>
<evidence type="ECO:0000256" key="3">
    <source>
        <dbReference type="SAM" id="MobiDB-lite"/>
    </source>
</evidence>
<evidence type="ECO:0000269" key="4">
    <source>
    </source>
</evidence>
<evidence type="ECO:0000305" key="5"/>
<organism>
    <name type="scientific">Dictyostelium discoideum</name>
    <name type="common">Social amoeba</name>
    <dbReference type="NCBI Taxonomy" id="44689"/>
    <lineage>
        <taxon>Eukaryota</taxon>
        <taxon>Amoebozoa</taxon>
        <taxon>Evosea</taxon>
        <taxon>Eumycetozoa</taxon>
        <taxon>Dictyostelia</taxon>
        <taxon>Dictyosteliales</taxon>
        <taxon>Dictyosteliaceae</taxon>
        <taxon>Dictyostelium</taxon>
    </lineage>
</organism>
<dbReference type="EMBL" id="AAFI02000012">
    <property type="protein sequence ID" value="EAL69991.1"/>
    <property type="molecule type" value="Genomic_DNA"/>
</dbReference>
<dbReference type="RefSeq" id="XP_644267.1">
    <property type="nucleotide sequence ID" value="XM_639175.1"/>
</dbReference>
<dbReference type="SMR" id="Q8T199"/>
<dbReference type="FunCoup" id="Q8T199">
    <property type="interactions" value="892"/>
</dbReference>
<dbReference type="STRING" id="44689.Q8T199"/>
<dbReference type="PaxDb" id="44689-DDB0266731"/>
<dbReference type="EnsemblProtists" id="EAL69991">
    <property type="protein sequence ID" value="EAL69991"/>
    <property type="gene ID" value="DDB_G0274197"/>
</dbReference>
<dbReference type="GeneID" id="8619695"/>
<dbReference type="KEGG" id="ddi:DDB_G0274197"/>
<dbReference type="dictyBase" id="DDB_G0274197">
    <property type="gene designation" value="omt3"/>
</dbReference>
<dbReference type="VEuPathDB" id="AmoebaDB:DDB_G0274197"/>
<dbReference type="eggNOG" id="KOG2361">
    <property type="taxonomic scope" value="Eukaryota"/>
</dbReference>
<dbReference type="HOGENOM" id="CLU_029724_0_2_1"/>
<dbReference type="InParanoid" id="Q8T199"/>
<dbReference type="OMA" id="FVCDIAT"/>
<dbReference type="PhylomeDB" id="Q8T199"/>
<dbReference type="PRO" id="PR:Q8T199"/>
<dbReference type="Proteomes" id="UP000002195">
    <property type="component" value="Chromosome 2"/>
</dbReference>
<dbReference type="GO" id="GO:0008173">
    <property type="term" value="F:RNA methyltransferase activity"/>
    <property type="evidence" value="ECO:0007669"/>
    <property type="project" value="UniProtKB-ARBA"/>
</dbReference>
<dbReference type="GO" id="GO:0008757">
    <property type="term" value="F:S-adenosylmethionine-dependent methyltransferase activity"/>
    <property type="evidence" value="ECO:0007669"/>
    <property type="project" value="UniProtKB-ARBA"/>
</dbReference>
<dbReference type="GO" id="GO:0032259">
    <property type="term" value="P:methylation"/>
    <property type="evidence" value="ECO:0007669"/>
    <property type="project" value="UniProtKB-KW"/>
</dbReference>
<dbReference type="CDD" id="cd02440">
    <property type="entry name" value="AdoMet_MTases"/>
    <property type="match status" value="1"/>
</dbReference>
<dbReference type="Gene3D" id="3.40.50.150">
    <property type="entry name" value="Vaccinia Virus protein VP39"/>
    <property type="match status" value="1"/>
</dbReference>
<dbReference type="InterPro" id="IPR013217">
    <property type="entry name" value="Methyltransf_12"/>
</dbReference>
<dbReference type="InterPro" id="IPR026113">
    <property type="entry name" value="METTL2/6/8-like"/>
</dbReference>
<dbReference type="InterPro" id="IPR029063">
    <property type="entry name" value="SAM-dependent_MTases_sf"/>
</dbReference>
<dbReference type="PANTHER" id="PTHR22809">
    <property type="entry name" value="METHYLTRANSFERASE-RELATED"/>
    <property type="match status" value="1"/>
</dbReference>
<dbReference type="PANTHER" id="PTHR22809:SF5">
    <property type="entry name" value="TRNA N(3)-METHYLCYTIDINE METHYLTRANSFERASE METTL6"/>
    <property type="match status" value="1"/>
</dbReference>
<dbReference type="Pfam" id="PF08242">
    <property type="entry name" value="Methyltransf_12"/>
    <property type="match status" value="1"/>
</dbReference>
<dbReference type="PIRSF" id="PIRSF037755">
    <property type="entry name" value="Mettl2_prd"/>
    <property type="match status" value="1"/>
</dbReference>
<dbReference type="SUPFAM" id="SSF53335">
    <property type="entry name" value="S-adenosyl-L-methionine-dependent methyltransferases"/>
    <property type="match status" value="1"/>
</dbReference>
<protein>
    <recommendedName>
        <fullName>O-methyltransferase 3</fullName>
    </recommendedName>
</protein>
<comment type="function">
    <text evidence="1">Probable methyltransferase.</text>
</comment>
<comment type="induction">
    <text evidence="4">Up-regulated by phagocytic stimuli.</text>
</comment>
<comment type="similarity">
    <text evidence="5">Belongs to the methyltransferase superfamily. METL family.</text>
</comment>
<accession>Q8T199</accession>
<accession>Q554Q6</accession>